<dbReference type="EC" id="7.1.1.-" evidence="1"/>
<dbReference type="EMBL" id="DQ897681">
    <property type="protein sequence ID" value="ABI17351.1"/>
    <property type="molecule type" value="Genomic_DNA"/>
</dbReference>
<dbReference type="SMR" id="P0CD27"/>
<dbReference type="GO" id="GO:0009535">
    <property type="term" value="C:chloroplast thylakoid membrane"/>
    <property type="evidence" value="ECO:0007669"/>
    <property type="project" value="UniProtKB-SubCell"/>
</dbReference>
<dbReference type="GO" id="GO:0008137">
    <property type="term" value="F:NADH dehydrogenase (ubiquinone) activity"/>
    <property type="evidence" value="ECO:0007669"/>
    <property type="project" value="InterPro"/>
</dbReference>
<dbReference type="GO" id="GO:0048038">
    <property type="term" value="F:quinone binding"/>
    <property type="evidence" value="ECO:0007669"/>
    <property type="project" value="UniProtKB-KW"/>
</dbReference>
<dbReference type="GO" id="GO:0042773">
    <property type="term" value="P:ATP synthesis coupled electron transport"/>
    <property type="evidence" value="ECO:0007669"/>
    <property type="project" value="InterPro"/>
</dbReference>
<dbReference type="GO" id="GO:0019684">
    <property type="term" value="P:photosynthesis, light reaction"/>
    <property type="evidence" value="ECO:0007669"/>
    <property type="project" value="UniProtKB-UniRule"/>
</dbReference>
<dbReference type="HAMAP" id="MF_00445">
    <property type="entry name" value="NDH1_NuoN_1"/>
    <property type="match status" value="1"/>
</dbReference>
<dbReference type="InterPro" id="IPR010096">
    <property type="entry name" value="NADH-Q_OxRdtase_suN/2"/>
</dbReference>
<dbReference type="InterPro" id="IPR001750">
    <property type="entry name" value="ND/Mrp_TM"/>
</dbReference>
<dbReference type="InterPro" id="IPR045693">
    <property type="entry name" value="Ndh2_N"/>
</dbReference>
<dbReference type="NCBIfam" id="TIGR01770">
    <property type="entry name" value="NDH_I_N"/>
    <property type="match status" value="1"/>
</dbReference>
<dbReference type="NCBIfam" id="NF002701">
    <property type="entry name" value="PRK02504.1"/>
    <property type="match status" value="1"/>
</dbReference>
<dbReference type="PANTHER" id="PTHR22773">
    <property type="entry name" value="NADH DEHYDROGENASE"/>
    <property type="match status" value="1"/>
</dbReference>
<dbReference type="Pfam" id="PF19530">
    <property type="entry name" value="Ndh2_N"/>
    <property type="match status" value="1"/>
</dbReference>
<dbReference type="Pfam" id="PF00361">
    <property type="entry name" value="Proton_antipo_M"/>
    <property type="match status" value="1"/>
</dbReference>
<dbReference type="PRINTS" id="PR01434">
    <property type="entry name" value="NADHDHGNASE5"/>
</dbReference>
<keyword id="KW-0150">Chloroplast</keyword>
<keyword id="KW-0472">Membrane</keyword>
<keyword id="KW-0520">NAD</keyword>
<keyword id="KW-0521">NADP</keyword>
<keyword id="KW-0934">Plastid</keyword>
<keyword id="KW-0618">Plastoquinone</keyword>
<keyword id="KW-0874">Quinone</keyword>
<keyword id="KW-0793">Thylakoid</keyword>
<keyword id="KW-1278">Translocase</keyword>
<keyword id="KW-0812">Transmembrane</keyword>
<keyword id="KW-1133">Transmembrane helix</keyword>
<keyword id="KW-0813">Transport</keyword>
<accession>P0CD27</accession>
<accession>Q06FM1</accession>
<feature type="chain" id="PRO_0000391301" description="NAD(P)H-quinone oxidoreductase subunit 2 B, chloroplastic">
    <location>
        <begin position="1"/>
        <end position="500"/>
    </location>
</feature>
<feature type="transmembrane region" description="Helical" evidence="1">
    <location>
        <begin position="14"/>
        <end position="34"/>
    </location>
</feature>
<feature type="transmembrane region" description="Helical" evidence="1">
    <location>
        <begin position="47"/>
        <end position="67"/>
    </location>
</feature>
<feature type="transmembrane region" description="Helical" evidence="1">
    <location>
        <begin position="89"/>
        <end position="109"/>
    </location>
</feature>
<feature type="transmembrane region" description="Helical" evidence="1">
    <location>
        <begin position="114"/>
        <end position="134"/>
    </location>
</feature>
<feature type="transmembrane region" description="Helical" evidence="1">
    <location>
        <begin position="139"/>
        <end position="159"/>
    </location>
</feature>
<feature type="transmembrane region" description="Helical" evidence="1">
    <location>
        <begin position="173"/>
        <end position="193"/>
    </location>
</feature>
<feature type="transmembrane region" description="Helical" evidence="1">
    <location>
        <begin position="217"/>
        <end position="237"/>
    </location>
</feature>
<feature type="transmembrane region" description="Helical" evidence="1">
    <location>
        <begin position="285"/>
        <end position="305"/>
    </location>
</feature>
<feature type="transmembrane region" description="Helical" evidence="1">
    <location>
        <begin position="313"/>
        <end position="333"/>
    </location>
</feature>
<feature type="transmembrane region" description="Helical" evidence="1">
    <location>
        <begin position="344"/>
        <end position="364"/>
    </location>
</feature>
<feature type="transmembrane region" description="Helical" evidence="1">
    <location>
        <begin position="385"/>
        <end position="405"/>
    </location>
</feature>
<feature type="transmembrane region" description="Helical" evidence="1">
    <location>
        <begin position="408"/>
        <end position="428"/>
    </location>
</feature>
<feature type="transmembrane region" description="Helical" evidence="1">
    <location>
        <begin position="474"/>
        <end position="494"/>
    </location>
</feature>
<reference key="1">
    <citation type="journal article" date="2006" name="Mol. Biol. Evol.">
        <title>The complete chloroplast genome sequence of Pelargonium x hortorum: organization and evolution of the largest and most highly rearranged chloroplast genome of land plants.</title>
        <authorList>
            <person name="Chumley T.W."/>
            <person name="Palmer J.D."/>
            <person name="Mower J.P."/>
            <person name="Fourcade H.M."/>
            <person name="Calie P.J."/>
            <person name="Boore J.L."/>
            <person name="Jansen R.K."/>
        </authorList>
    </citation>
    <scope>NUCLEOTIDE SEQUENCE [LARGE SCALE GENOMIC DNA]</scope>
    <source>
        <strain>cv. Ringo White</strain>
    </source>
</reference>
<sequence length="500" mass="55294">MLDSTRIFMKAFHLLLFDGSLIFPECILIFGLILLLMIDSTSDQKDIPWFYFISSTSLVMSITALLFRWREEPMISFSGNFQTNHFNEIFQFLILLCSTLSIPLSVEYIECTEMAITEFLLFILTATLGGMFLCGANDFITIFVAPECFSLCSYLLSGYTKKDVRSNEATMKYLLMGGASSSILVHAFSWLYGSSGGEIELQEIVNGLINTQMYNSPGISIALIFITVGIGFKLSPAPSHQWTPDVYEGSPTPVVAFLSVTSKVAASASATRIFDIPFYFSSNEWHLLLEILAILSMILGNLIAITQTSMKRMLAYSSIGQIGYVIIGIIVGDSNGGYASMITYMLFYISMNLGTFACIVLFGLRTGTDNIRDYAGLYTKDPFLALSLALCLLSLGGLPPLAGFFGKLHLFWCGWQAGLSFLVSIGLLTSVLSIYYYLKIIKLLMTGRNQEITPHVRNYKRSPLRSKNSIELSMIVCVIASTIPGISMNPIIAIAQDTLF</sequence>
<evidence type="ECO:0000255" key="1">
    <source>
        <dbReference type="HAMAP-Rule" id="MF_00445"/>
    </source>
</evidence>
<geneLocation type="chloroplast"/>
<name>NU2C2_PELHO</name>
<protein>
    <recommendedName>
        <fullName evidence="1">NAD(P)H-quinone oxidoreductase subunit 2 B, chloroplastic</fullName>
        <ecNumber evidence="1">7.1.1.-</ecNumber>
    </recommendedName>
    <alternativeName>
        <fullName evidence="1">NAD(P)H dehydrogenase, subunit 2 B</fullName>
    </alternativeName>
    <alternativeName>
        <fullName evidence="1">NADH-plastoquinone oxidoreductase subunit 2 B</fullName>
    </alternativeName>
</protein>
<organism>
    <name type="scientific">Pelargonium hortorum</name>
    <name type="common">Common geranium</name>
    <name type="synonym">Pelargonium inquinans x Pelargonium zonale</name>
    <dbReference type="NCBI Taxonomy" id="4031"/>
    <lineage>
        <taxon>Eukaryota</taxon>
        <taxon>Viridiplantae</taxon>
        <taxon>Streptophyta</taxon>
        <taxon>Embryophyta</taxon>
        <taxon>Tracheophyta</taxon>
        <taxon>Spermatophyta</taxon>
        <taxon>Magnoliopsida</taxon>
        <taxon>eudicotyledons</taxon>
        <taxon>Gunneridae</taxon>
        <taxon>Pentapetalae</taxon>
        <taxon>rosids</taxon>
        <taxon>malvids</taxon>
        <taxon>Geraniales</taxon>
        <taxon>Geraniaceae</taxon>
        <taxon>Pelargonium</taxon>
    </lineage>
</organism>
<comment type="function">
    <text evidence="1">NDH shuttles electrons from NAD(P)H:plastoquinone, via FMN and iron-sulfur (Fe-S) centers, to quinones in the photosynthetic chain and possibly in a chloroplast respiratory chain. The immediate electron acceptor for the enzyme in this species is believed to be plastoquinone. Couples the redox reaction to proton translocation, and thus conserves the redox energy in a proton gradient.</text>
</comment>
<comment type="catalytic activity">
    <reaction evidence="1">
        <text>a plastoquinone + NADH + (n+1) H(+)(in) = a plastoquinol + NAD(+) + n H(+)(out)</text>
        <dbReference type="Rhea" id="RHEA:42608"/>
        <dbReference type="Rhea" id="RHEA-COMP:9561"/>
        <dbReference type="Rhea" id="RHEA-COMP:9562"/>
        <dbReference type="ChEBI" id="CHEBI:15378"/>
        <dbReference type="ChEBI" id="CHEBI:17757"/>
        <dbReference type="ChEBI" id="CHEBI:57540"/>
        <dbReference type="ChEBI" id="CHEBI:57945"/>
        <dbReference type="ChEBI" id="CHEBI:62192"/>
    </reaction>
</comment>
<comment type="catalytic activity">
    <reaction evidence="1">
        <text>a plastoquinone + NADPH + (n+1) H(+)(in) = a plastoquinol + NADP(+) + n H(+)(out)</text>
        <dbReference type="Rhea" id="RHEA:42612"/>
        <dbReference type="Rhea" id="RHEA-COMP:9561"/>
        <dbReference type="Rhea" id="RHEA-COMP:9562"/>
        <dbReference type="ChEBI" id="CHEBI:15378"/>
        <dbReference type="ChEBI" id="CHEBI:17757"/>
        <dbReference type="ChEBI" id="CHEBI:57783"/>
        <dbReference type="ChEBI" id="CHEBI:58349"/>
        <dbReference type="ChEBI" id="CHEBI:62192"/>
    </reaction>
</comment>
<comment type="subunit">
    <text evidence="1">NDH is composed of at least 16 different subunits, 5 of which are encoded in the nucleus.</text>
</comment>
<comment type="subcellular location">
    <subcellularLocation>
        <location evidence="1">Plastid</location>
        <location evidence="1">Chloroplast thylakoid membrane</location>
        <topology evidence="1">Multi-pass membrane protein</topology>
    </subcellularLocation>
</comment>
<comment type="similarity">
    <text evidence="1">Belongs to the complex I subunit 2 family.</text>
</comment>
<proteinExistence type="inferred from homology"/>
<gene>
    <name evidence="1" type="primary">ndhB2</name>
</gene>